<accession>Q99N64</accession>
<accession>E9QJS3</accession>
<accession>Q99N65</accession>
<accession>Q99N66</accession>
<accession>Q9DA87</accession>
<reference key="1">
    <citation type="submission" date="2001-02" db="EMBL/GenBank/DDBJ databases">
        <title>Molecular cloning of a novel mouse germ cell-less homologue expressing haploid specifically in mouse testis.</title>
        <authorList>
            <person name="Aizawa A."/>
            <person name="Kawakami A."/>
            <person name="Kondo T."/>
        </authorList>
    </citation>
    <scope>NUCLEOTIDE SEQUENCE [MRNA]</scope>
    <source>
        <strain>BALB/cJ</strain>
        <tissue>Testis</tissue>
    </source>
</reference>
<reference key="2">
    <citation type="journal article" date="2005" name="Science">
        <title>The transcriptional landscape of the mammalian genome.</title>
        <authorList>
            <person name="Carninci P."/>
            <person name="Kasukawa T."/>
            <person name="Katayama S."/>
            <person name="Gough J."/>
            <person name="Frith M.C."/>
            <person name="Maeda N."/>
            <person name="Oyama R."/>
            <person name="Ravasi T."/>
            <person name="Lenhard B."/>
            <person name="Wells C."/>
            <person name="Kodzius R."/>
            <person name="Shimokawa K."/>
            <person name="Bajic V.B."/>
            <person name="Brenner S.E."/>
            <person name="Batalov S."/>
            <person name="Forrest A.R."/>
            <person name="Zavolan M."/>
            <person name="Davis M.J."/>
            <person name="Wilming L.G."/>
            <person name="Aidinis V."/>
            <person name="Allen J.E."/>
            <person name="Ambesi-Impiombato A."/>
            <person name="Apweiler R."/>
            <person name="Aturaliya R.N."/>
            <person name="Bailey T.L."/>
            <person name="Bansal M."/>
            <person name="Baxter L."/>
            <person name="Beisel K.W."/>
            <person name="Bersano T."/>
            <person name="Bono H."/>
            <person name="Chalk A.M."/>
            <person name="Chiu K.P."/>
            <person name="Choudhary V."/>
            <person name="Christoffels A."/>
            <person name="Clutterbuck D.R."/>
            <person name="Crowe M.L."/>
            <person name="Dalla E."/>
            <person name="Dalrymple B.P."/>
            <person name="de Bono B."/>
            <person name="Della Gatta G."/>
            <person name="di Bernardo D."/>
            <person name="Down T."/>
            <person name="Engstrom P."/>
            <person name="Fagiolini M."/>
            <person name="Faulkner G."/>
            <person name="Fletcher C.F."/>
            <person name="Fukushima T."/>
            <person name="Furuno M."/>
            <person name="Futaki S."/>
            <person name="Gariboldi M."/>
            <person name="Georgii-Hemming P."/>
            <person name="Gingeras T.R."/>
            <person name="Gojobori T."/>
            <person name="Green R.E."/>
            <person name="Gustincich S."/>
            <person name="Harbers M."/>
            <person name="Hayashi Y."/>
            <person name="Hensch T.K."/>
            <person name="Hirokawa N."/>
            <person name="Hill D."/>
            <person name="Huminiecki L."/>
            <person name="Iacono M."/>
            <person name="Ikeo K."/>
            <person name="Iwama A."/>
            <person name="Ishikawa T."/>
            <person name="Jakt M."/>
            <person name="Kanapin A."/>
            <person name="Katoh M."/>
            <person name="Kawasawa Y."/>
            <person name="Kelso J."/>
            <person name="Kitamura H."/>
            <person name="Kitano H."/>
            <person name="Kollias G."/>
            <person name="Krishnan S.P."/>
            <person name="Kruger A."/>
            <person name="Kummerfeld S.K."/>
            <person name="Kurochkin I.V."/>
            <person name="Lareau L.F."/>
            <person name="Lazarevic D."/>
            <person name="Lipovich L."/>
            <person name="Liu J."/>
            <person name="Liuni S."/>
            <person name="McWilliam S."/>
            <person name="Madan Babu M."/>
            <person name="Madera M."/>
            <person name="Marchionni L."/>
            <person name="Matsuda H."/>
            <person name="Matsuzawa S."/>
            <person name="Miki H."/>
            <person name="Mignone F."/>
            <person name="Miyake S."/>
            <person name="Morris K."/>
            <person name="Mottagui-Tabar S."/>
            <person name="Mulder N."/>
            <person name="Nakano N."/>
            <person name="Nakauchi H."/>
            <person name="Ng P."/>
            <person name="Nilsson R."/>
            <person name="Nishiguchi S."/>
            <person name="Nishikawa S."/>
            <person name="Nori F."/>
            <person name="Ohara O."/>
            <person name="Okazaki Y."/>
            <person name="Orlando V."/>
            <person name="Pang K.C."/>
            <person name="Pavan W.J."/>
            <person name="Pavesi G."/>
            <person name="Pesole G."/>
            <person name="Petrovsky N."/>
            <person name="Piazza S."/>
            <person name="Reed J."/>
            <person name="Reid J.F."/>
            <person name="Ring B.Z."/>
            <person name="Ringwald M."/>
            <person name="Rost B."/>
            <person name="Ruan Y."/>
            <person name="Salzberg S.L."/>
            <person name="Sandelin A."/>
            <person name="Schneider C."/>
            <person name="Schoenbach C."/>
            <person name="Sekiguchi K."/>
            <person name="Semple C.A."/>
            <person name="Seno S."/>
            <person name="Sessa L."/>
            <person name="Sheng Y."/>
            <person name="Shibata Y."/>
            <person name="Shimada H."/>
            <person name="Shimada K."/>
            <person name="Silva D."/>
            <person name="Sinclair B."/>
            <person name="Sperling S."/>
            <person name="Stupka E."/>
            <person name="Sugiura K."/>
            <person name="Sultana R."/>
            <person name="Takenaka Y."/>
            <person name="Taki K."/>
            <person name="Tammoja K."/>
            <person name="Tan S.L."/>
            <person name="Tang S."/>
            <person name="Taylor M.S."/>
            <person name="Tegner J."/>
            <person name="Teichmann S.A."/>
            <person name="Ueda H.R."/>
            <person name="van Nimwegen E."/>
            <person name="Verardo R."/>
            <person name="Wei C.L."/>
            <person name="Yagi K."/>
            <person name="Yamanishi H."/>
            <person name="Zabarovsky E."/>
            <person name="Zhu S."/>
            <person name="Zimmer A."/>
            <person name="Hide W."/>
            <person name="Bult C."/>
            <person name="Grimmond S.M."/>
            <person name="Teasdale R.D."/>
            <person name="Liu E.T."/>
            <person name="Brusic V."/>
            <person name="Quackenbush J."/>
            <person name="Wahlestedt C."/>
            <person name="Mattick J.S."/>
            <person name="Hume D.A."/>
            <person name="Kai C."/>
            <person name="Sasaki D."/>
            <person name="Tomaru Y."/>
            <person name="Fukuda S."/>
            <person name="Kanamori-Katayama M."/>
            <person name="Suzuki M."/>
            <person name="Aoki J."/>
            <person name="Arakawa T."/>
            <person name="Iida J."/>
            <person name="Imamura K."/>
            <person name="Itoh M."/>
            <person name="Kato T."/>
            <person name="Kawaji H."/>
            <person name="Kawagashira N."/>
            <person name="Kawashima T."/>
            <person name="Kojima M."/>
            <person name="Kondo S."/>
            <person name="Konno H."/>
            <person name="Nakano K."/>
            <person name="Ninomiya N."/>
            <person name="Nishio T."/>
            <person name="Okada M."/>
            <person name="Plessy C."/>
            <person name="Shibata K."/>
            <person name="Shiraki T."/>
            <person name="Suzuki S."/>
            <person name="Tagami M."/>
            <person name="Waki K."/>
            <person name="Watahiki A."/>
            <person name="Okamura-Oho Y."/>
            <person name="Suzuki H."/>
            <person name="Kawai J."/>
            <person name="Hayashizaki Y."/>
        </authorList>
    </citation>
    <scope>NUCLEOTIDE SEQUENCE [LARGE SCALE MRNA]</scope>
    <source>
        <strain>C57BL/6J</strain>
        <tissue>Testis</tissue>
    </source>
</reference>
<reference key="3">
    <citation type="journal article" date="2009" name="PLoS Biol.">
        <title>Lineage-specific biology revealed by a finished genome assembly of the mouse.</title>
        <authorList>
            <person name="Church D.M."/>
            <person name="Goodstadt L."/>
            <person name="Hillier L.W."/>
            <person name="Zody M.C."/>
            <person name="Goldstein S."/>
            <person name="She X."/>
            <person name="Bult C.J."/>
            <person name="Agarwala R."/>
            <person name="Cherry J.L."/>
            <person name="DiCuccio M."/>
            <person name="Hlavina W."/>
            <person name="Kapustin Y."/>
            <person name="Meric P."/>
            <person name="Maglott D."/>
            <person name="Birtle Z."/>
            <person name="Marques A.C."/>
            <person name="Graves T."/>
            <person name="Zhou S."/>
            <person name="Teague B."/>
            <person name="Potamousis K."/>
            <person name="Churas C."/>
            <person name="Place M."/>
            <person name="Herschleb J."/>
            <person name="Runnheim R."/>
            <person name="Forrest D."/>
            <person name="Amos-Landgraf J."/>
            <person name="Schwartz D.C."/>
            <person name="Cheng Z."/>
            <person name="Lindblad-Toh K."/>
            <person name="Eichler E.E."/>
            <person name="Ponting C.P."/>
        </authorList>
    </citation>
    <scope>NUCLEOTIDE SEQUENCE [LARGE SCALE GENOMIC DNA]</scope>
    <source>
        <strain>C57BL/6J</strain>
    </source>
</reference>
<comment type="function">
    <text evidence="1 2">Possible function in spermatogenesis. Probable substrate-specific adapter of an E3 ubiquitin-protein ligase complex which mediates the ubiquitination and subsequent proteasomal degradation of target proteins.</text>
</comment>
<comment type="pathway">
    <text evidence="1">Protein modification; protein ubiquitination.</text>
</comment>
<comment type="subunit">
    <text evidence="1">Interacts with CUL3.</text>
</comment>
<comment type="subcellular location">
    <subcellularLocation>
        <location evidence="2">Nucleus matrix</location>
    </subcellularLocation>
</comment>
<keyword id="KW-0217">Developmental protein</keyword>
<keyword id="KW-0221">Differentiation</keyword>
<keyword id="KW-0539">Nucleus</keyword>
<keyword id="KW-1185">Reference proteome</keyword>
<keyword id="KW-0744">Spermatogenesis</keyword>
<keyword id="KW-0833">Ubl conjugation pathway</keyword>
<dbReference type="EMBL" id="AB055854">
    <property type="protein sequence ID" value="BAB40688.1"/>
    <property type="molecule type" value="mRNA"/>
</dbReference>
<dbReference type="EMBL" id="AB055855">
    <property type="protein sequence ID" value="BAB40689.1"/>
    <property type="molecule type" value="mRNA"/>
</dbReference>
<dbReference type="EMBL" id="AB055856">
    <property type="protein sequence ID" value="BAB40690.1"/>
    <property type="molecule type" value="mRNA"/>
</dbReference>
<dbReference type="EMBL" id="AK006065">
    <property type="protein sequence ID" value="BAB24393.1"/>
    <property type="molecule type" value="mRNA"/>
</dbReference>
<dbReference type="EMBL" id="CT867960">
    <property type="status" value="NOT_ANNOTATED_CDS"/>
    <property type="molecule type" value="Genomic_DNA"/>
</dbReference>
<dbReference type="CCDS" id="CCDS53040.1"/>
<dbReference type="CCDS" id="CCDS57720.1"/>
<dbReference type="CCDS" id="CCDS57742.1"/>
<dbReference type="RefSeq" id="NP_001161809.1">
    <property type="nucleotide sequence ID" value="NM_001168337.1"/>
</dbReference>
<dbReference type="RefSeq" id="NP_001257596.1">
    <property type="nucleotide sequence ID" value="NM_001270667.1"/>
</dbReference>
<dbReference type="RefSeq" id="NP_001257598.1">
    <property type="nucleotide sequence ID" value="NM_001270669.1"/>
</dbReference>
<dbReference type="SMR" id="Q99N64"/>
<dbReference type="FunCoup" id="Q99N64">
    <property type="interactions" value="28"/>
</dbReference>
<dbReference type="STRING" id="10090.ENSMUSP00000136615"/>
<dbReference type="PaxDb" id="10090-ENSMUSP00000136330"/>
<dbReference type="Ensembl" id="ENSMUST00000178747.3">
    <property type="protein sequence ID" value="ENSMUSP00000136615.3"/>
    <property type="gene ID" value="ENSMUSG00000118409.2"/>
</dbReference>
<dbReference type="GeneID" id="100040533"/>
<dbReference type="GeneID" id="100861966"/>
<dbReference type="GeneID" id="100862329"/>
<dbReference type="KEGG" id="mmu:100040533"/>
<dbReference type="KEGG" id="mmu:100861966"/>
<dbReference type="KEGG" id="mmu:100862329"/>
<dbReference type="UCSC" id="uc012hfq.1">
    <property type="organism name" value="mouse"/>
</dbReference>
<dbReference type="AGR" id="MGI:1919097"/>
<dbReference type="CTD" id="100040533"/>
<dbReference type="CTD" id="100861966"/>
<dbReference type="CTD" id="100862329"/>
<dbReference type="MGI" id="MGI:1919097">
    <property type="gene designation" value="Btbd35f1"/>
</dbReference>
<dbReference type="VEuPathDB" id="HostDB:ENSMUSG00000118409"/>
<dbReference type="eggNOG" id="KOG4682">
    <property type="taxonomic scope" value="Eukaryota"/>
</dbReference>
<dbReference type="GeneTree" id="ENSGT00940000163246"/>
<dbReference type="HOGENOM" id="CLU_025961_2_0_1"/>
<dbReference type="InParanoid" id="Q99N64"/>
<dbReference type="OrthoDB" id="60555at9989"/>
<dbReference type="PhylomeDB" id="Q99N64"/>
<dbReference type="TreeFam" id="TF316048"/>
<dbReference type="UniPathway" id="UPA00143"/>
<dbReference type="BioGRID-ORCS" id="100040533">
    <property type="hits" value="1 hit in 24 CRISPR screens"/>
</dbReference>
<dbReference type="BioGRID-ORCS" id="100861966">
    <property type="hits" value="1 hit in 33 CRISPR screens"/>
</dbReference>
<dbReference type="BioGRID-ORCS" id="100862329">
    <property type="hits" value="2 hits in 30 CRISPR screens"/>
</dbReference>
<dbReference type="PRO" id="PR:Q99N64"/>
<dbReference type="Proteomes" id="UP000000589">
    <property type="component" value="Chromosome X"/>
</dbReference>
<dbReference type="RNAct" id="Q99N64">
    <property type="molecule type" value="protein"/>
</dbReference>
<dbReference type="Bgee" id="ENSMUSG00000118409">
    <property type="expression patterns" value="Expressed in spermatid and 2 other cell types or tissues"/>
</dbReference>
<dbReference type="GO" id="GO:0016363">
    <property type="term" value="C:nuclear matrix"/>
    <property type="evidence" value="ECO:0007669"/>
    <property type="project" value="UniProtKB-SubCell"/>
</dbReference>
<dbReference type="GO" id="GO:0007281">
    <property type="term" value="P:germ cell development"/>
    <property type="evidence" value="ECO:0007669"/>
    <property type="project" value="InterPro"/>
</dbReference>
<dbReference type="GO" id="GO:0016567">
    <property type="term" value="P:protein ubiquitination"/>
    <property type="evidence" value="ECO:0007669"/>
    <property type="project" value="UniProtKB-UniPathway"/>
</dbReference>
<dbReference type="GO" id="GO:0007283">
    <property type="term" value="P:spermatogenesis"/>
    <property type="evidence" value="ECO:0007669"/>
    <property type="project" value="UniProtKB-KW"/>
</dbReference>
<dbReference type="Gene3D" id="3.30.710.10">
    <property type="entry name" value="Potassium Channel Kv1.1, Chain A"/>
    <property type="match status" value="1"/>
</dbReference>
<dbReference type="InterPro" id="IPR000210">
    <property type="entry name" value="BTB/POZ_dom"/>
</dbReference>
<dbReference type="InterPro" id="IPR043380">
    <property type="entry name" value="Gcl-like"/>
</dbReference>
<dbReference type="InterPro" id="IPR011333">
    <property type="entry name" value="SKP1/BTB/POZ_sf"/>
</dbReference>
<dbReference type="PANTHER" id="PTHR23231:SF3">
    <property type="entry name" value="BTB DOMAIN CONTAINING 35, FAMILY MEMBER 10-RELATED"/>
    <property type="match status" value="1"/>
</dbReference>
<dbReference type="PANTHER" id="PTHR23231">
    <property type="entry name" value="GERM CELL-LESS PROTEIN"/>
    <property type="match status" value="1"/>
</dbReference>
<dbReference type="Pfam" id="PF00651">
    <property type="entry name" value="BTB"/>
    <property type="match status" value="1"/>
</dbReference>
<dbReference type="SMART" id="SM00225">
    <property type="entry name" value="BTB"/>
    <property type="match status" value="1"/>
</dbReference>
<dbReference type="SUPFAM" id="SSF54695">
    <property type="entry name" value="POZ domain"/>
    <property type="match status" value="1"/>
</dbReference>
<dbReference type="PROSITE" id="PS50097">
    <property type="entry name" value="BTB"/>
    <property type="match status" value="1"/>
</dbReference>
<evidence type="ECO:0000250" key="1">
    <source>
        <dbReference type="UniProtKB" id="Q8NEA9"/>
    </source>
</evidence>
<evidence type="ECO:0000250" key="2">
    <source>
        <dbReference type="UniProtKB" id="Q920G9"/>
    </source>
</evidence>
<evidence type="ECO:0000255" key="3"/>
<evidence type="ECO:0000255" key="4">
    <source>
        <dbReference type="PROSITE-ProRule" id="PRU00037"/>
    </source>
</evidence>
<evidence type="ECO:0000305" key="5"/>
<evidence type="ECO:0000312" key="6">
    <source>
        <dbReference type="MGI" id="MGI:1919097"/>
    </source>
</evidence>
<protein>
    <recommendedName>
        <fullName>Germ cell-less protein-like 2</fullName>
    </recommendedName>
    <alternativeName>
        <fullName>BTB domain containing 35, family member 1</fullName>
    </alternativeName>
    <alternativeName>
        <fullName>Germ cell-less protein-like 1-like</fullName>
    </alternativeName>
    <alternativeName>
        <fullName>mGclh</fullName>
    </alternativeName>
</protein>
<organism>
    <name type="scientific">Mus musculus</name>
    <name type="common">Mouse</name>
    <dbReference type="NCBI Taxonomy" id="10090"/>
    <lineage>
        <taxon>Eukaryota</taxon>
        <taxon>Metazoa</taxon>
        <taxon>Chordata</taxon>
        <taxon>Craniata</taxon>
        <taxon>Vertebrata</taxon>
        <taxon>Euteleostomi</taxon>
        <taxon>Mammalia</taxon>
        <taxon>Eutheria</taxon>
        <taxon>Euarchontoglires</taxon>
        <taxon>Glires</taxon>
        <taxon>Rodentia</taxon>
        <taxon>Myomorpha</taxon>
        <taxon>Muroidea</taxon>
        <taxon>Muridae</taxon>
        <taxon>Murinae</taxon>
        <taxon>Mus</taxon>
        <taxon>Mus</taxon>
    </lineage>
</organism>
<gene>
    <name type="primary">Gmcl2</name>
    <name evidence="6" type="synonym">Btbd35f1</name>
    <name type="synonym">Gmcl1l</name>
    <name type="synonym">Gmcl1p1</name>
</gene>
<sequence length="498" mass="57827">MGLLVSRVLRCRDSSLLEPQPEAIAGASYIPGSRKRKRNSLEELATSSNVHGPQNQGMYPHQVLNYIYWKRVKISSNDAYQNLFLDGHDSDIKIRALGRTWCLHKVFLCQSGYFANILKGTWRESHHGVINLIIKNEDIDTRSLHFVFGALYTDADLSITPLEVPQVLAAACLLRVDRVIQQCEGIMKETINRNTVCSYYLAAETYRLKAVKTRCFEWLLCNLMVHPSVALYKEVDLKLMYLLALSSDLLVMQKEIDVYTTLKIWMFLYLNPCWNGTMKQLLQHANNWLSTHMAYVDNISFLESEEGLIFQPVFKKLRFQHIICDLTSTTILEQDRLIPMAWLSPIYKQQWLTLLRTQEYGVIGPQVINEQELEECTMRCGTMIPKDGRYTWKWSVGRLGFPLRVTFTRQCVILRQRCQRCDGSACHNHIRNVIFRITLVCFDSNKRVTFRKTTGYKILTFEYKEEQIVMKLDSDVLTFPMCIFCNFLFVNLGNAENK</sequence>
<name>GMCL2_MOUSE</name>
<proteinExistence type="evidence at transcript level"/>
<feature type="chain" id="PRO_0000087522" description="Germ cell-less protein-like 2">
    <location>
        <begin position="1"/>
        <end position="498"/>
    </location>
</feature>
<feature type="domain" description="BTB" evidence="4">
    <location>
        <begin position="90"/>
        <end position="160"/>
    </location>
</feature>
<feature type="short sequence motif" description="Nuclear localization signal" evidence="3">
    <location>
        <begin position="33"/>
        <end position="39"/>
    </location>
</feature>
<feature type="sequence conflict" description="In Ref. 2; BAB24393." evidence="5" ref="2">
    <original>V</original>
    <variation>A</variation>
    <location>
        <position position="5"/>
    </location>
</feature>
<feature type="sequence conflict" description="In Ref. 1; BAB40689." evidence="5" ref="1">
    <original>A</original>
    <variation>G</variation>
    <location>
        <position position="23"/>
    </location>
</feature>
<feature type="sequence conflict" description="In Ref. 1; BAB40689." evidence="5" ref="1">
    <original>G</original>
    <variation>V</variation>
    <location>
        <position position="32"/>
    </location>
</feature>
<feature type="sequence conflict" description="In Ref. 1; BAB40690 and 2; BAB24393." evidence="5" ref="1 2">
    <original>R</original>
    <variation>N</variation>
    <location>
        <position position="71"/>
    </location>
</feature>
<feature type="sequence conflict" description="In Ref. 2; BAB24393." evidence="5" ref="2">
    <original>H</original>
    <variation>Y</variation>
    <location>
        <position position="104"/>
    </location>
</feature>
<feature type="sequence conflict" description="In Ref. 1; BAB40689." evidence="5" ref="1">
    <original>A</original>
    <variation>T</variation>
    <location>
        <position position="115"/>
    </location>
</feature>
<feature type="sequence conflict" description="In Ref. 1; BAB40689." evidence="5" ref="1">
    <original>Q</original>
    <variation>K</variation>
    <location>
        <position position="182"/>
    </location>
</feature>
<feature type="sequence conflict" description="In Ref. 1; BAB40688." evidence="5" ref="1">
    <original>L</original>
    <variation>M</variation>
    <location>
        <position position="237"/>
    </location>
</feature>
<feature type="sequence conflict" description="In Ref. 1; BAB40688." evidence="5" ref="1">
    <original>F</original>
    <variation>I</variation>
    <location>
        <position position="267"/>
    </location>
</feature>
<feature type="sequence conflict" description="In Ref. 1; BAB40688." evidence="5" ref="1">
    <original>V</original>
    <variation>I</variation>
    <location>
        <position position="296"/>
    </location>
</feature>
<feature type="sequence conflict" description="In Ref. 1; BAB40689." evidence="5" ref="1">
    <original>D</original>
    <variation>N</variation>
    <location>
        <position position="325"/>
    </location>
</feature>
<feature type="sequence conflict" description="In Ref. 1; BAB40689/BAB40688." evidence="5" ref="1">
    <original>K</original>
    <variation>N</variation>
    <location>
        <position position="464"/>
    </location>
</feature>
<feature type="sequence conflict" description="In Ref. 1; BAB40689." evidence="5" ref="1">
    <original>E</original>
    <variation>Q</variation>
    <location>
        <position position="465"/>
    </location>
</feature>